<evidence type="ECO:0000255" key="1">
    <source>
        <dbReference type="HAMAP-Rule" id="MF_00823"/>
    </source>
</evidence>
<evidence type="ECO:0000255" key="2">
    <source>
        <dbReference type="PROSITE-ProRule" id="PRU01137"/>
    </source>
</evidence>
<gene>
    <name evidence="1" type="primary">accA</name>
    <name type="ordered locus">Pro_0534</name>
</gene>
<dbReference type="EC" id="2.1.3.15" evidence="1"/>
<dbReference type="EMBL" id="AE017126">
    <property type="protein sequence ID" value="AAP99579.1"/>
    <property type="molecule type" value="Genomic_DNA"/>
</dbReference>
<dbReference type="RefSeq" id="NP_874927.1">
    <property type="nucleotide sequence ID" value="NC_005042.1"/>
</dbReference>
<dbReference type="RefSeq" id="WP_011124688.1">
    <property type="nucleotide sequence ID" value="NC_005042.1"/>
</dbReference>
<dbReference type="SMR" id="Q7VD49"/>
<dbReference type="STRING" id="167539.Pro_0534"/>
<dbReference type="EnsemblBacteria" id="AAP99579">
    <property type="protein sequence ID" value="AAP99579"/>
    <property type="gene ID" value="Pro_0534"/>
</dbReference>
<dbReference type="KEGG" id="pma:Pro_0534"/>
<dbReference type="PATRIC" id="fig|167539.5.peg.548"/>
<dbReference type="eggNOG" id="COG0825">
    <property type="taxonomic scope" value="Bacteria"/>
</dbReference>
<dbReference type="HOGENOM" id="CLU_015486_0_2_3"/>
<dbReference type="OrthoDB" id="9808023at2"/>
<dbReference type="UniPathway" id="UPA00655">
    <property type="reaction ID" value="UER00711"/>
</dbReference>
<dbReference type="Proteomes" id="UP000001420">
    <property type="component" value="Chromosome"/>
</dbReference>
<dbReference type="GO" id="GO:0009317">
    <property type="term" value="C:acetyl-CoA carboxylase complex"/>
    <property type="evidence" value="ECO:0007669"/>
    <property type="project" value="InterPro"/>
</dbReference>
<dbReference type="GO" id="GO:0003989">
    <property type="term" value="F:acetyl-CoA carboxylase activity"/>
    <property type="evidence" value="ECO:0007669"/>
    <property type="project" value="InterPro"/>
</dbReference>
<dbReference type="GO" id="GO:0005524">
    <property type="term" value="F:ATP binding"/>
    <property type="evidence" value="ECO:0007669"/>
    <property type="project" value="UniProtKB-KW"/>
</dbReference>
<dbReference type="GO" id="GO:0016743">
    <property type="term" value="F:carboxyl- or carbamoyltransferase activity"/>
    <property type="evidence" value="ECO:0007669"/>
    <property type="project" value="UniProtKB-UniRule"/>
</dbReference>
<dbReference type="GO" id="GO:0006633">
    <property type="term" value="P:fatty acid biosynthetic process"/>
    <property type="evidence" value="ECO:0007669"/>
    <property type="project" value="UniProtKB-KW"/>
</dbReference>
<dbReference type="GO" id="GO:2001295">
    <property type="term" value="P:malonyl-CoA biosynthetic process"/>
    <property type="evidence" value="ECO:0007669"/>
    <property type="project" value="UniProtKB-UniRule"/>
</dbReference>
<dbReference type="Gene3D" id="3.90.226.10">
    <property type="entry name" value="2-enoyl-CoA Hydratase, Chain A, domain 1"/>
    <property type="match status" value="1"/>
</dbReference>
<dbReference type="HAMAP" id="MF_00823">
    <property type="entry name" value="AcetylCoA_CT_alpha"/>
    <property type="match status" value="1"/>
</dbReference>
<dbReference type="InterPro" id="IPR001095">
    <property type="entry name" value="Acetyl_CoA_COase_a_su"/>
</dbReference>
<dbReference type="InterPro" id="IPR029045">
    <property type="entry name" value="ClpP/crotonase-like_dom_sf"/>
</dbReference>
<dbReference type="InterPro" id="IPR011763">
    <property type="entry name" value="COA_CT_C"/>
</dbReference>
<dbReference type="NCBIfam" id="TIGR00513">
    <property type="entry name" value="accA"/>
    <property type="match status" value="1"/>
</dbReference>
<dbReference type="NCBIfam" id="NF041504">
    <property type="entry name" value="AccA_sub"/>
    <property type="match status" value="1"/>
</dbReference>
<dbReference type="NCBIfam" id="NF004344">
    <property type="entry name" value="PRK05724.1"/>
    <property type="match status" value="1"/>
</dbReference>
<dbReference type="PANTHER" id="PTHR42853">
    <property type="entry name" value="ACETYL-COENZYME A CARBOXYLASE CARBOXYL TRANSFERASE SUBUNIT ALPHA"/>
    <property type="match status" value="1"/>
</dbReference>
<dbReference type="PANTHER" id="PTHR42853:SF3">
    <property type="entry name" value="ACETYL-COENZYME A CARBOXYLASE CARBOXYL TRANSFERASE SUBUNIT ALPHA, CHLOROPLASTIC"/>
    <property type="match status" value="1"/>
</dbReference>
<dbReference type="Pfam" id="PF03255">
    <property type="entry name" value="ACCA"/>
    <property type="match status" value="1"/>
</dbReference>
<dbReference type="PRINTS" id="PR01069">
    <property type="entry name" value="ACCCTRFRASEA"/>
</dbReference>
<dbReference type="SUPFAM" id="SSF52096">
    <property type="entry name" value="ClpP/crotonase"/>
    <property type="match status" value="1"/>
</dbReference>
<dbReference type="PROSITE" id="PS50989">
    <property type="entry name" value="COA_CT_CTER"/>
    <property type="match status" value="1"/>
</dbReference>
<keyword id="KW-0067">ATP-binding</keyword>
<keyword id="KW-0963">Cytoplasm</keyword>
<keyword id="KW-0275">Fatty acid biosynthesis</keyword>
<keyword id="KW-0276">Fatty acid metabolism</keyword>
<keyword id="KW-0444">Lipid biosynthesis</keyword>
<keyword id="KW-0443">Lipid metabolism</keyword>
<keyword id="KW-0547">Nucleotide-binding</keyword>
<keyword id="KW-1185">Reference proteome</keyword>
<keyword id="KW-0808">Transferase</keyword>
<accession>Q7VD49</accession>
<feature type="chain" id="PRO_0000223801" description="Acetyl-coenzyme A carboxylase carboxyl transferase subunit alpha">
    <location>
        <begin position="1"/>
        <end position="329"/>
    </location>
</feature>
<feature type="domain" description="CoA carboxyltransferase C-terminal" evidence="2">
    <location>
        <begin position="40"/>
        <end position="294"/>
    </location>
</feature>
<comment type="function">
    <text evidence="1">Component of the acetyl coenzyme A carboxylase (ACC) complex. First, biotin carboxylase catalyzes the carboxylation of biotin on its carrier protein (BCCP) and then the CO(2) group is transferred by the carboxyltransferase to acetyl-CoA to form malonyl-CoA.</text>
</comment>
<comment type="catalytic activity">
    <reaction evidence="1">
        <text>N(6)-carboxybiotinyl-L-lysyl-[protein] + acetyl-CoA = N(6)-biotinyl-L-lysyl-[protein] + malonyl-CoA</text>
        <dbReference type="Rhea" id="RHEA:54728"/>
        <dbReference type="Rhea" id="RHEA-COMP:10505"/>
        <dbReference type="Rhea" id="RHEA-COMP:10506"/>
        <dbReference type="ChEBI" id="CHEBI:57288"/>
        <dbReference type="ChEBI" id="CHEBI:57384"/>
        <dbReference type="ChEBI" id="CHEBI:83144"/>
        <dbReference type="ChEBI" id="CHEBI:83145"/>
        <dbReference type="EC" id="2.1.3.15"/>
    </reaction>
</comment>
<comment type="pathway">
    <text evidence="1">Lipid metabolism; malonyl-CoA biosynthesis; malonyl-CoA from acetyl-CoA: step 1/1.</text>
</comment>
<comment type="subunit">
    <text evidence="1">Acetyl-CoA carboxylase is a heterohexamer composed of biotin carboxyl carrier protein (AccB), biotin carboxylase (AccC) and two subunits each of ACCase subunit alpha (AccA) and ACCase subunit beta (AccD).</text>
</comment>
<comment type="subcellular location">
    <subcellularLocation>
        <location evidence="1">Cytoplasm</location>
    </subcellularLocation>
</comment>
<comment type="similarity">
    <text evidence="1">Belongs to the AccA family.</text>
</comment>
<reference key="1">
    <citation type="journal article" date="2003" name="Proc. Natl. Acad. Sci. U.S.A.">
        <title>Genome sequence of the cyanobacterium Prochlorococcus marinus SS120, a nearly minimal oxyphototrophic genome.</title>
        <authorList>
            <person name="Dufresne A."/>
            <person name="Salanoubat M."/>
            <person name="Partensky F."/>
            <person name="Artiguenave F."/>
            <person name="Axmann I.M."/>
            <person name="Barbe V."/>
            <person name="Duprat S."/>
            <person name="Galperin M.Y."/>
            <person name="Koonin E.V."/>
            <person name="Le Gall F."/>
            <person name="Makarova K.S."/>
            <person name="Ostrowski M."/>
            <person name="Oztas S."/>
            <person name="Robert C."/>
            <person name="Rogozin I.B."/>
            <person name="Scanlan D.J."/>
            <person name="Tandeau de Marsac N."/>
            <person name="Weissenbach J."/>
            <person name="Wincker P."/>
            <person name="Wolf Y.I."/>
            <person name="Hess W.R."/>
        </authorList>
    </citation>
    <scope>NUCLEOTIDE SEQUENCE [LARGE SCALE GENOMIC DNA]</scope>
    <source>
        <strain>SARG / CCMP1375 / SS120</strain>
    </source>
</reference>
<sequence>MARRYLLEFEKPLVELEKQIEQIRELARDSEVDVSQQLLQLETLAARRREEIFSALTPAEKIQVARHPQRPSTLDFIQMFCEDWIELHGDRNCSDDSALIGGIARIEDIPVLLIGQQKGRDTKENVARNFGMAKPSGYRKALRLMNHADKFNLPIISFIDTPGAYAGLLAEEQGQGEAIAVNLREMFRIKVPIIATVIGEGGSGGALGIGVADRLLMFEHSVYTVASPEACASILWRDAAKAPDAAAALKITGSDLLTLGIVDEVIKEPAGGNNWAPLQAGEALKTSILRHLTELSTLSEHKLRDNRYKKFRQIGSFLELSSQEEQLIT</sequence>
<name>ACCA_PROMA</name>
<organism>
    <name type="scientific">Prochlorococcus marinus (strain SARG / CCMP1375 / SS120)</name>
    <dbReference type="NCBI Taxonomy" id="167539"/>
    <lineage>
        <taxon>Bacteria</taxon>
        <taxon>Bacillati</taxon>
        <taxon>Cyanobacteriota</taxon>
        <taxon>Cyanophyceae</taxon>
        <taxon>Synechococcales</taxon>
        <taxon>Prochlorococcaceae</taxon>
        <taxon>Prochlorococcus</taxon>
    </lineage>
</organism>
<protein>
    <recommendedName>
        <fullName evidence="1">Acetyl-coenzyme A carboxylase carboxyl transferase subunit alpha</fullName>
        <shortName evidence="1">ACCase subunit alpha</shortName>
        <shortName evidence="1">Acetyl-CoA carboxylase carboxyltransferase subunit alpha</shortName>
        <ecNumber evidence="1">2.1.3.15</ecNumber>
    </recommendedName>
</protein>
<proteinExistence type="inferred from homology"/>